<comment type="function">
    <text evidence="2 7">Component of the triterpene saponins (e.g. ginsenosides or panaxosides) and phytosterols biosynthetic pathways (PubMed:29378087). Catalyzes the biosynthesis of squalene (By similarity).</text>
</comment>
<comment type="catalytic activity">
    <reaction evidence="3">
        <text>2 (2E,6E)-farnesyl diphosphate + NADH + H(+) = squalene + 2 diphosphate + NAD(+)</text>
        <dbReference type="Rhea" id="RHEA:32299"/>
        <dbReference type="ChEBI" id="CHEBI:15378"/>
        <dbReference type="ChEBI" id="CHEBI:15440"/>
        <dbReference type="ChEBI" id="CHEBI:33019"/>
        <dbReference type="ChEBI" id="CHEBI:57540"/>
        <dbReference type="ChEBI" id="CHEBI:57945"/>
        <dbReference type="ChEBI" id="CHEBI:175763"/>
        <dbReference type="EC" id="2.5.1.21"/>
    </reaction>
    <physiologicalReaction direction="left-to-right" evidence="1">
        <dbReference type="Rhea" id="RHEA:32300"/>
    </physiologicalReaction>
</comment>
<comment type="catalytic activity">
    <reaction evidence="3">
        <text>2 (2E,6E)-farnesyl diphosphate + NADPH + H(+) = squalene + 2 diphosphate + NADP(+)</text>
        <dbReference type="Rhea" id="RHEA:32295"/>
        <dbReference type="ChEBI" id="CHEBI:15378"/>
        <dbReference type="ChEBI" id="CHEBI:15440"/>
        <dbReference type="ChEBI" id="CHEBI:33019"/>
        <dbReference type="ChEBI" id="CHEBI:57783"/>
        <dbReference type="ChEBI" id="CHEBI:58349"/>
        <dbReference type="ChEBI" id="CHEBI:175763"/>
        <dbReference type="EC" id="2.5.1.21"/>
    </reaction>
    <physiologicalReaction direction="left-to-right" evidence="1">
        <dbReference type="Rhea" id="RHEA:32296"/>
    </physiologicalReaction>
</comment>
<comment type="cofactor">
    <cofactor evidence="3">
        <name>Mg(2+)</name>
        <dbReference type="ChEBI" id="CHEBI:18420"/>
    </cofactor>
    <cofactor evidence="3">
        <name>Mn(2+)</name>
        <dbReference type="ChEBI" id="CHEBI:29035"/>
    </cofactor>
</comment>
<comment type="pathway">
    <text evidence="3">Terpene metabolism; lanosterol biosynthesis; lanosterol from farnesyl diphosphate: step 1/3.</text>
</comment>
<comment type="subcellular location">
    <subcellularLocation>
        <location evidence="3">Endoplasmic reticulum membrane</location>
        <topology evidence="4">Multi-pass membrane protein</topology>
    </subcellularLocation>
</comment>
<comment type="induction">
    <text evidence="5">Induced methyl jasmonate (MeJA) in adventitious roots.</text>
</comment>
<comment type="similarity">
    <text evidence="8">Belongs to the phytoene/squalene synthase family.</text>
</comment>
<gene>
    <name evidence="6" type="primary">SS11</name>
</gene>
<dbReference type="EC" id="2.5.1.21" evidence="3"/>
<dbReference type="EMBL" id="KP689321">
    <property type="protein sequence ID" value="AJK30633.1"/>
    <property type="molecule type" value="mRNA"/>
</dbReference>
<dbReference type="SMR" id="A0A1P7Y0D4"/>
<dbReference type="UniPathway" id="UPA00767">
    <property type="reaction ID" value="UER00751"/>
</dbReference>
<dbReference type="GO" id="GO:0005789">
    <property type="term" value="C:endoplasmic reticulum membrane"/>
    <property type="evidence" value="ECO:0007669"/>
    <property type="project" value="UniProtKB-SubCell"/>
</dbReference>
<dbReference type="GO" id="GO:0051996">
    <property type="term" value="F:squalene synthase [NAD(P)H] activity"/>
    <property type="evidence" value="ECO:0007669"/>
    <property type="project" value="UniProtKB-EC"/>
</dbReference>
<dbReference type="GO" id="GO:0045338">
    <property type="term" value="P:farnesyl diphosphate metabolic process"/>
    <property type="evidence" value="ECO:0007669"/>
    <property type="project" value="InterPro"/>
</dbReference>
<dbReference type="GO" id="GO:0008299">
    <property type="term" value="P:isoprenoid biosynthetic process"/>
    <property type="evidence" value="ECO:0007669"/>
    <property type="project" value="UniProtKB-KW"/>
</dbReference>
<dbReference type="GO" id="GO:0009753">
    <property type="term" value="P:response to jasmonic acid"/>
    <property type="evidence" value="ECO:0000270"/>
    <property type="project" value="UniProtKB"/>
</dbReference>
<dbReference type="CDD" id="cd00683">
    <property type="entry name" value="Trans_IPPS_HH"/>
    <property type="match status" value="1"/>
</dbReference>
<dbReference type="FunFam" id="1.10.600.10:FF:000012">
    <property type="entry name" value="Squalene synthase 1"/>
    <property type="match status" value="1"/>
</dbReference>
<dbReference type="Gene3D" id="1.10.600.10">
    <property type="entry name" value="Farnesyl Diphosphate Synthase"/>
    <property type="match status" value="1"/>
</dbReference>
<dbReference type="InterPro" id="IPR008949">
    <property type="entry name" value="Isoprenoid_synthase_dom_sf"/>
</dbReference>
<dbReference type="InterPro" id="IPR002060">
    <property type="entry name" value="Squ/phyt_synthse"/>
</dbReference>
<dbReference type="InterPro" id="IPR006449">
    <property type="entry name" value="Squal_synth-like"/>
</dbReference>
<dbReference type="InterPro" id="IPR019845">
    <property type="entry name" value="Squalene/phytoene_synthase_CS"/>
</dbReference>
<dbReference type="InterPro" id="IPR044844">
    <property type="entry name" value="Trans_IPPS_euk-type"/>
</dbReference>
<dbReference type="InterPro" id="IPR033904">
    <property type="entry name" value="Trans_IPPS_HH"/>
</dbReference>
<dbReference type="NCBIfam" id="TIGR01559">
    <property type="entry name" value="squal_synth"/>
    <property type="match status" value="1"/>
</dbReference>
<dbReference type="PANTHER" id="PTHR11626">
    <property type="entry name" value="FARNESYL-DIPHOSPHATE FARNESYLTRANSFERASE"/>
    <property type="match status" value="1"/>
</dbReference>
<dbReference type="PANTHER" id="PTHR11626:SF2">
    <property type="entry name" value="SQUALENE SYNTHASE"/>
    <property type="match status" value="1"/>
</dbReference>
<dbReference type="Pfam" id="PF00494">
    <property type="entry name" value="SQS_PSY"/>
    <property type="match status" value="1"/>
</dbReference>
<dbReference type="SFLD" id="SFLDS00005">
    <property type="entry name" value="Isoprenoid_Synthase_Type_I"/>
    <property type="match status" value="1"/>
</dbReference>
<dbReference type="SFLD" id="SFLDG01018">
    <property type="entry name" value="Squalene/Phytoene_Synthase_Lik"/>
    <property type="match status" value="1"/>
</dbReference>
<dbReference type="SUPFAM" id="SSF48576">
    <property type="entry name" value="Terpenoid synthases"/>
    <property type="match status" value="1"/>
</dbReference>
<dbReference type="PROSITE" id="PS01044">
    <property type="entry name" value="SQUALEN_PHYTOEN_SYN_1"/>
    <property type="match status" value="1"/>
</dbReference>
<dbReference type="PROSITE" id="PS01045">
    <property type="entry name" value="SQUALEN_PHYTOEN_SYN_2"/>
    <property type="match status" value="1"/>
</dbReference>
<sequence>MGSLGAILKHPEDFYPLLKLKIAARHAEKQIPSEPHWAFCYSMLHKVSRSFGLVIQQLGPQLRDAVCIFYLVLRALDTVEDDTSISTEVKVPILMAFHRHIYDNDWHFSCGTKEYKVLMDEFHHVSNAFLDLGSGYKEAIEDITMRMGAGMAKFICKEVETIDDYDEYCHYVAGLVGLGLSKLFHASGAEDLATDSLSNSMGLFLQKTNIIRDYLEDINEIPKSRMFWPRQIWSKYVDKLEDLKYEENSAKAVQCLNDMVTDALVHAEDCLKYMSDLRGPAIFRFCAIPQIMAIGTLALCFNNTQVFRGVVKMRRGLTAKVIDQTKTMSDVYGAFFDFSCLLKSKVDNNDPNATKTLSRLEAIQKICKNSGALTTKRKSYIIENESGYNSTLIIILFIILAILYAYLSSNLPNSL</sequence>
<feature type="chain" id="PRO_0000446957" description="Squalene synthase 11">
    <location>
        <begin position="1"/>
        <end position="415"/>
    </location>
</feature>
<feature type="transmembrane region" description="Helical" evidence="4">
    <location>
        <begin position="281"/>
        <end position="301"/>
    </location>
</feature>
<feature type="transmembrane region" description="Helical" evidence="4">
    <location>
        <begin position="392"/>
        <end position="412"/>
    </location>
</feature>
<keyword id="KW-0256">Endoplasmic reticulum</keyword>
<keyword id="KW-0414">Isoprene biosynthesis</keyword>
<keyword id="KW-0472">Membrane</keyword>
<keyword id="KW-0808">Transferase</keyword>
<keyword id="KW-0812">Transmembrane</keyword>
<keyword id="KW-1133">Transmembrane helix</keyword>
<protein>
    <recommendedName>
        <fullName evidence="6">Squalene synthase 11</fullName>
        <shortName evidence="8">PgSS11</shortName>
        <shortName evidence="8">SQS 11</shortName>
        <ecNumber evidence="3">2.5.1.21</ecNumber>
    </recommendedName>
    <alternativeName>
        <fullName evidence="8">FPP:FPP farnesyltransferase SS11</fullName>
    </alternativeName>
    <alternativeName>
        <fullName evidence="8">Farnesyl-diphosphate farnesyltransferase SS11</fullName>
    </alternativeName>
</protein>
<evidence type="ECO:0000250" key="1">
    <source>
        <dbReference type="UniProtKB" id="D2K762"/>
    </source>
</evidence>
<evidence type="ECO:0000250" key="2">
    <source>
        <dbReference type="UniProtKB" id="O48666"/>
    </source>
</evidence>
<evidence type="ECO:0000250" key="3">
    <source>
        <dbReference type="UniProtKB" id="P53799"/>
    </source>
</evidence>
<evidence type="ECO:0000255" key="4"/>
<evidence type="ECO:0000269" key="5">
    <source>
    </source>
</evidence>
<evidence type="ECO:0000303" key="6">
    <source>
    </source>
</evidence>
<evidence type="ECO:0000303" key="7">
    <source>
    </source>
</evidence>
<evidence type="ECO:0000305" key="8"/>
<name>SQS11_PANGI</name>
<organism>
    <name type="scientific">Panax ginseng</name>
    <name type="common">Korean ginseng</name>
    <dbReference type="NCBI Taxonomy" id="4054"/>
    <lineage>
        <taxon>Eukaryota</taxon>
        <taxon>Viridiplantae</taxon>
        <taxon>Streptophyta</taxon>
        <taxon>Embryophyta</taxon>
        <taxon>Tracheophyta</taxon>
        <taxon>Spermatophyta</taxon>
        <taxon>Magnoliopsida</taxon>
        <taxon>eudicotyledons</taxon>
        <taxon>Gunneridae</taxon>
        <taxon>Pentapetalae</taxon>
        <taxon>asterids</taxon>
        <taxon>campanulids</taxon>
        <taxon>Apiales</taxon>
        <taxon>Araliaceae</taxon>
        <taxon>Panax</taxon>
    </lineage>
</organism>
<accession>A0A1P7Y0D4</accession>
<reference key="1">
    <citation type="journal article" date="2015" name="Int. J. Mol. Sci.">
        <title>Transcriptome analysis of methyl jasmonate-elicited Panax ginseng adventitious roots to discover putative ginsenoside biosynthesis and transport genes.</title>
        <authorList>
            <person name="Cao H."/>
            <person name="Nuruzzaman M."/>
            <person name="Xiu H."/>
            <person name="Huang J."/>
            <person name="Wu K."/>
            <person name="Chen X."/>
            <person name="Li J."/>
            <person name="Wang L."/>
            <person name="Jeong J.-H."/>
            <person name="Park S.-J."/>
            <person name="Yang F."/>
            <person name="Luo J."/>
            <person name="Luo Z."/>
        </authorList>
    </citation>
    <scope>NUCLEOTIDE SEQUENCE [LARGE SCALE MRNA]</scope>
    <scope>INDUCTION BY METHYL JASMONATE</scope>
    <source>
        <strain>cv. Damaya</strain>
    </source>
</reference>
<reference key="2">
    <citation type="journal article" date="2018" name="Biotechnol. Appl. Biochem.">
        <title>Advances in ginsenoside biosynthesis and metabolic regulation.</title>
        <authorList>
            <person name="Lu J."/>
            <person name="Li J."/>
            <person name="Wang S."/>
            <person name="Yao L."/>
            <person name="Liang W."/>
            <person name="Wang J."/>
            <person name="Gao W."/>
        </authorList>
    </citation>
    <scope>REVIEW</scope>
</reference>
<reference key="3">
    <citation type="journal article" date="2018" name="Molecules">
        <title>Progress on the studies of the key enzymes of ginsenoside biosynthesis.</title>
        <authorList>
            <person name="Yang J.-L."/>
            <person name="Hu Z.-F."/>
            <person name="Zhang T.-T."/>
            <person name="Gu A.-D."/>
            <person name="Gong T."/>
            <person name="Zhu P."/>
        </authorList>
    </citation>
    <scope>REVIEW</scope>
</reference>
<proteinExistence type="evidence at transcript level"/>